<proteinExistence type="inferred from homology"/>
<feature type="chain" id="PRO_0000138223" description="CTP synthase">
    <location>
        <begin position="1"/>
        <end position="536"/>
    </location>
</feature>
<feature type="domain" description="Glutamine amidotransferase type-1" evidence="1">
    <location>
        <begin position="293"/>
        <end position="535"/>
    </location>
</feature>
<feature type="region of interest" description="Amidoligase domain" evidence="1">
    <location>
        <begin position="1"/>
        <end position="267"/>
    </location>
</feature>
<feature type="active site" description="Nucleophile; for glutamine hydrolysis" evidence="1">
    <location>
        <position position="382"/>
    </location>
</feature>
<feature type="active site" evidence="1">
    <location>
        <position position="508"/>
    </location>
</feature>
<feature type="active site" evidence="1">
    <location>
        <position position="510"/>
    </location>
</feature>
<feature type="binding site" evidence="1">
    <location>
        <position position="13"/>
    </location>
    <ligand>
        <name>CTP</name>
        <dbReference type="ChEBI" id="CHEBI:37563"/>
        <note>allosteric inhibitor</note>
    </ligand>
</feature>
<feature type="binding site" evidence="1">
    <location>
        <position position="13"/>
    </location>
    <ligand>
        <name>UTP</name>
        <dbReference type="ChEBI" id="CHEBI:46398"/>
    </ligand>
</feature>
<feature type="binding site" evidence="1">
    <location>
        <begin position="14"/>
        <end position="19"/>
    </location>
    <ligand>
        <name>ATP</name>
        <dbReference type="ChEBI" id="CHEBI:30616"/>
    </ligand>
</feature>
<feature type="binding site" evidence="1">
    <location>
        <position position="54"/>
    </location>
    <ligand>
        <name>L-glutamine</name>
        <dbReference type="ChEBI" id="CHEBI:58359"/>
    </ligand>
</feature>
<feature type="binding site" evidence="1">
    <location>
        <position position="71"/>
    </location>
    <ligand>
        <name>ATP</name>
        <dbReference type="ChEBI" id="CHEBI:30616"/>
    </ligand>
</feature>
<feature type="binding site" evidence="1">
    <location>
        <position position="71"/>
    </location>
    <ligand>
        <name>Mg(2+)</name>
        <dbReference type="ChEBI" id="CHEBI:18420"/>
    </ligand>
</feature>
<feature type="binding site" evidence="1">
    <location>
        <position position="141"/>
    </location>
    <ligand>
        <name>Mg(2+)</name>
        <dbReference type="ChEBI" id="CHEBI:18420"/>
    </ligand>
</feature>
<feature type="binding site" evidence="1">
    <location>
        <begin position="148"/>
        <end position="150"/>
    </location>
    <ligand>
        <name>CTP</name>
        <dbReference type="ChEBI" id="CHEBI:37563"/>
        <note>allosteric inhibitor</note>
    </ligand>
</feature>
<feature type="binding site" evidence="1">
    <location>
        <begin position="188"/>
        <end position="193"/>
    </location>
    <ligand>
        <name>CTP</name>
        <dbReference type="ChEBI" id="CHEBI:37563"/>
        <note>allosteric inhibitor</note>
    </ligand>
</feature>
<feature type="binding site" evidence="1">
    <location>
        <begin position="188"/>
        <end position="193"/>
    </location>
    <ligand>
        <name>UTP</name>
        <dbReference type="ChEBI" id="CHEBI:46398"/>
    </ligand>
</feature>
<feature type="binding site" evidence="1">
    <location>
        <position position="224"/>
    </location>
    <ligand>
        <name>CTP</name>
        <dbReference type="ChEBI" id="CHEBI:37563"/>
        <note>allosteric inhibitor</note>
    </ligand>
</feature>
<feature type="binding site" evidence="1">
    <location>
        <position position="224"/>
    </location>
    <ligand>
        <name>UTP</name>
        <dbReference type="ChEBI" id="CHEBI:46398"/>
    </ligand>
</feature>
<feature type="binding site" evidence="1">
    <location>
        <begin position="240"/>
        <end position="242"/>
    </location>
    <ligand>
        <name>ATP</name>
        <dbReference type="ChEBI" id="CHEBI:30616"/>
    </ligand>
</feature>
<feature type="binding site" evidence="1">
    <location>
        <position position="355"/>
    </location>
    <ligand>
        <name>L-glutamine</name>
        <dbReference type="ChEBI" id="CHEBI:58359"/>
    </ligand>
</feature>
<feature type="binding site" evidence="1">
    <location>
        <begin position="383"/>
        <end position="386"/>
    </location>
    <ligand>
        <name>L-glutamine</name>
        <dbReference type="ChEBI" id="CHEBI:58359"/>
    </ligand>
</feature>
<feature type="binding site" evidence="1">
    <location>
        <position position="406"/>
    </location>
    <ligand>
        <name>L-glutamine</name>
        <dbReference type="ChEBI" id="CHEBI:58359"/>
    </ligand>
</feature>
<feature type="binding site" evidence="1">
    <location>
        <position position="463"/>
    </location>
    <ligand>
        <name>L-glutamine</name>
        <dbReference type="ChEBI" id="CHEBI:58359"/>
    </ligand>
</feature>
<comment type="function">
    <text evidence="1">Catalyzes the ATP-dependent amination of UTP to CTP with either L-glutamine or ammonia as the source of nitrogen. Regulates intracellular CTP levels through interactions with the four ribonucleotide triphosphates.</text>
</comment>
<comment type="catalytic activity">
    <reaction evidence="1">
        <text>UTP + L-glutamine + ATP + H2O = CTP + L-glutamate + ADP + phosphate + 2 H(+)</text>
        <dbReference type="Rhea" id="RHEA:26426"/>
        <dbReference type="ChEBI" id="CHEBI:15377"/>
        <dbReference type="ChEBI" id="CHEBI:15378"/>
        <dbReference type="ChEBI" id="CHEBI:29985"/>
        <dbReference type="ChEBI" id="CHEBI:30616"/>
        <dbReference type="ChEBI" id="CHEBI:37563"/>
        <dbReference type="ChEBI" id="CHEBI:43474"/>
        <dbReference type="ChEBI" id="CHEBI:46398"/>
        <dbReference type="ChEBI" id="CHEBI:58359"/>
        <dbReference type="ChEBI" id="CHEBI:456216"/>
        <dbReference type="EC" id="6.3.4.2"/>
    </reaction>
</comment>
<comment type="catalytic activity">
    <reaction evidence="1">
        <text>L-glutamine + H2O = L-glutamate + NH4(+)</text>
        <dbReference type="Rhea" id="RHEA:15889"/>
        <dbReference type="ChEBI" id="CHEBI:15377"/>
        <dbReference type="ChEBI" id="CHEBI:28938"/>
        <dbReference type="ChEBI" id="CHEBI:29985"/>
        <dbReference type="ChEBI" id="CHEBI:58359"/>
    </reaction>
</comment>
<comment type="catalytic activity">
    <reaction evidence="1">
        <text>UTP + NH4(+) + ATP = CTP + ADP + phosphate + 2 H(+)</text>
        <dbReference type="Rhea" id="RHEA:16597"/>
        <dbReference type="ChEBI" id="CHEBI:15378"/>
        <dbReference type="ChEBI" id="CHEBI:28938"/>
        <dbReference type="ChEBI" id="CHEBI:30616"/>
        <dbReference type="ChEBI" id="CHEBI:37563"/>
        <dbReference type="ChEBI" id="CHEBI:43474"/>
        <dbReference type="ChEBI" id="CHEBI:46398"/>
        <dbReference type="ChEBI" id="CHEBI:456216"/>
    </reaction>
</comment>
<comment type="activity regulation">
    <text evidence="1">Allosterically activated by GTP, when glutamine is the substrate; GTP has no effect on the reaction when ammonia is the substrate. The allosteric effector GTP functions by stabilizing the protein conformation that binds the tetrahedral intermediate(s) formed during glutamine hydrolysis. Inhibited by the product CTP, via allosteric rather than competitive inhibition.</text>
</comment>
<comment type="pathway">
    <text evidence="1">Pyrimidine metabolism; CTP biosynthesis via de novo pathway; CTP from UDP: step 2/2.</text>
</comment>
<comment type="subunit">
    <text evidence="1">Homotetramer.</text>
</comment>
<comment type="miscellaneous">
    <text evidence="1">CTPSs have evolved a hybrid strategy for distinguishing between UTP and CTP. The overlapping regions of the product feedback inhibitory and substrate sites recognize a common feature in both compounds, the triphosphate moiety. To differentiate isosteric substrate and product pyrimidine rings, an additional pocket far from the expected kinase/ligase catalytic site, specifically recognizes the cytosine and ribose portions of the product inhibitor.</text>
</comment>
<comment type="similarity">
    <text evidence="1">Belongs to the CTP synthase family.</text>
</comment>
<keyword id="KW-0067">ATP-binding</keyword>
<keyword id="KW-0315">Glutamine amidotransferase</keyword>
<keyword id="KW-0436">Ligase</keyword>
<keyword id="KW-0460">Magnesium</keyword>
<keyword id="KW-0479">Metal-binding</keyword>
<keyword id="KW-0547">Nucleotide-binding</keyword>
<keyword id="KW-0665">Pyrimidine biosynthesis</keyword>
<reference key="1">
    <citation type="journal article" date="2001" name="Lancet">
        <title>Whole genome sequencing of meticillin-resistant Staphylococcus aureus.</title>
        <authorList>
            <person name="Kuroda M."/>
            <person name="Ohta T."/>
            <person name="Uchiyama I."/>
            <person name="Baba T."/>
            <person name="Yuzawa H."/>
            <person name="Kobayashi I."/>
            <person name="Cui L."/>
            <person name="Oguchi A."/>
            <person name="Aoki K."/>
            <person name="Nagai Y."/>
            <person name="Lian J.-Q."/>
            <person name="Ito T."/>
            <person name="Kanamori M."/>
            <person name="Matsumaru H."/>
            <person name="Maruyama A."/>
            <person name="Murakami H."/>
            <person name="Hosoyama A."/>
            <person name="Mizutani-Ui Y."/>
            <person name="Takahashi N.K."/>
            <person name="Sawano T."/>
            <person name="Inoue R."/>
            <person name="Kaito C."/>
            <person name="Sekimizu K."/>
            <person name="Hirakawa H."/>
            <person name="Kuhara S."/>
            <person name="Goto S."/>
            <person name="Yabuzaki J."/>
            <person name="Kanehisa M."/>
            <person name="Yamashita A."/>
            <person name="Oshima K."/>
            <person name="Furuya K."/>
            <person name="Yoshino C."/>
            <person name="Shiba T."/>
            <person name="Hattori M."/>
            <person name="Ogasawara N."/>
            <person name="Hayashi H."/>
            <person name="Hiramatsu K."/>
        </authorList>
    </citation>
    <scope>NUCLEOTIDE SEQUENCE [LARGE SCALE GENOMIC DNA]</scope>
    <source>
        <strain>Mu50 / ATCC 700699</strain>
    </source>
</reference>
<organism>
    <name type="scientific">Staphylococcus aureus (strain Mu50 / ATCC 700699)</name>
    <dbReference type="NCBI Taxonomy" id="158878"/>
    <lineage>
        <taxon>Bacteria</taxon>
        <taxon>Bacillati</taxon>
        <taxon>Bacillota</taxon>
        <taxon>Bacilli</taxon>
        <taxon>Bacillales</taxon>
        <taxon>Staphylococcaceae</taxon>
        <taxon>Staphylococcus</taxon>
    </lineage>
</organism>
<protein>
    <recommendedName>
        <fullName evidence="1">CTP synthase</fullName>
        <ecNumber evidence="1">6.3.4.2</ecNumber>
    </recommendedName>
    <alternativeName>
        <fullName evidence="1">Cytidine 5'-triphosphate synthase</fullName>
    </alternativeName>
    <alternativeName>
        <fullName evidence="1">Cytidine triphosphate synthetase</fullName>
        <shortName evidence="1">CTP synthetase</shortName>
        <shortName evidence="1">CTPS</shortName>
    </alternativeName>
    <alternativeName>
        <fullName evidence="1">UTP--ammonia ligase</fullName>
    </alternativeName>
</protein>
<accession>P65923</accession>
<accession>Q99SD1</accession>
<dbReference type="EC" id="6.3.4.2" evidence="1"/>
<dbReference type="EMBL" id="BA000017">
    <property type="protein sequence ID" value="BAB58289.1"/>
    <property type="molecule type" value="Genomic_DNA"/>
</dbReference>
<dbReference type="RefSeq" id="WP_000159960.1">
    <property type="nucleotide sequence ID" value="NC_002758.2"/>
</dbReference>
<dbReference type="SMR" id="P65923"/>
<dbReference type="MEROPS" id="C26.964"/>
<dbReference type="KEGG" id="sav:SAV2127"/>
<dbReference type="HOGENOM" id="CLU_011675_5_0_9"/>
<dbReference type="PhylomeDB" id="P65923"/>
<dbReference type="UniPathway" id="UPA00159">
    <property type="reaction ID" value="UER00277"/>
</dbReference>
<dbReference type="Proteomes" id="UP000002481">
    <property type="component" value="Chromosome"/>
</dbReference>
<dbReference type="GO" id="GO:0005829">
    <property type="term" value="C:cytosol"/>
    <property type="evidence" value="ECO:0007669"/>
    <property type="project" value="TreeGrafter"/>
</dbReference>
<dbReference type="GO" id="GO:0005524">
    <property type="term" value="F:ATP binding"/>
    <property type="evidence" value="ECO:0007669"/>
    <property type="project" value="UniProtKB-KW"/>
</dbReference>
<dbReference type="GO" id="GO:0003883">
    <property type="term" value="F:CTP synthase activity"/>
    <property type="evidence" value="ECO:0007669"/>
    <property type="project" value="UniProtKB-UniRule"/>
</dbReference>
<dbReference type="GO" id="GO:0004359">
    <property type="term" value="F:glutaminase activity"/>
    <property type="evidence" value="ECO:0007669"/>
    <property type="project" value="RHEA"/>
</dbReference>
<dbReference type="GO" id="GO:0042802">
    <property type="term" value="F:identical protein binding"/>
    <property type="evidence" value="ECO:0007669"/>
    <property type="project" value="TreeGrafter"/>
</dbReference>
<dbReference type="GO" id="GO:0046872">
    <property type="term" value="F:metal ion binding"/>
    <property type="evidence" value="ECO:0007669"/>
    <property type="project" value="UniProtKB-KW"/>
</dbReference>
<dbReference type="GO" id="GO:0044210">
    <property type="term" value="P:'de novo' CTP biosynthetic process"/>
    <property type="evidence" value="ECO:0007669"/>
    <property type="project" value="UniProtKB-UniRule"/>
</dbReference>
<dbReference type="GO" id="GO:0019856">
    <property type="term" value="P:pyrimidine nucleobase biosynthetic process"/>
    <property type="evidence" value="ECO:0007669"/>
    <property type="project" value="TreeGrafter"/>
</dbReference>
<dbReference type="CDD" id="cd03113">
    <property type="entry name" value="CTPS_N"/>
    <property type="match status" value="1"/>
</dbReference>
<dbReference type="CDD" id="cd01746">
    <property type="entry name" value="GATase1_CTP_Synthase"/>
    <property type="match status" value="1"/>
</dbReference>
<dbReference type="FunFam" id="3.40.50.300:FF:000009">
    <property type="entry name" value="CTP synthase"/>
    <property type="match status" value="1"/>
</dbReference>
<dbReference type="FunFam" id="3.40.50.880:FF:000002">
    <property type="entry name" value="CTP synthase"/>
    <property type="match status" value="1"/>
</dbReference>
<dbReference type="Gene3D" id="3.40.50.880">
    <property type="match status" value="1"/>
</dbReference>
<dbReference type="Gene3D" id="3.40.50.300">
    <property type="entry name" value="P-loop containing nucleotide triphosphate hydrolases"/>
    <property type="match status" value="1"/>
</dbReference>
<dbReference type="HAMAP" id="MF_01227">
    <property type="entry name" value="PyrG"/>
    <property type="match status" value="1"/>
</dbReference>
<dbReference type="InterPro" id="IPR029062">
    <property type="entry name" value="Class_I_gatase-like"/>
</dbReference>
<dbReference type="InterPro" id="IPR004468">
    <property type="entry name" value="CTP_synthase"/>
</dbReference>
<dbReference type="InterPro" id="IPR017456">
    <property type="entry name" value="CTP_synthase_N"/>
</dbReference>
<dbReference type="InterPro" id="IPR017926">
    <property type="entry name" value="GATASE"/>
</dbReference>
<dbReference type="InterPro" id="IPR033828">
    <property type="entry name" value="GATase1_CTP_Synthase"/>
</dbReference>
<dbReference type="InterPro" id="IPR027417">
    <property type="entry name" value="P-loop_NTPase"/>
</dbReference>
<dbReference type="NCBIfam" id="NF003792">
    <property type="entry name" value="PRK05380.1"/>
    <property type="match status" value="1"/>
</dbReference>
<dbReference type="NCBIfam" id="TIGR00337">
    <property type="entry name" value="PyrG"/>
    <property type="match status" value="1"/>
</dbReference>
<dbReference type="PANTHER" id="PTHR11550">
    <property type="entry name" value="CTP SYNTHASE"/>
    <property type="match status" value="1"/>
</dbReference>
<dbReference type="PANTHER" id="PTHR11550:SF0">
    <property type="entry name" value="CTP SYNTHASE-RELATED"/>
    <property type="match status" value="1"/>
</dbReference>
<dbReference type="Pfam" id="PF06418">
    <property type="entry name" value="CTP_synth_N"/>
    <property type="match status" value="1"/>
</dbReference>
<dbReference type="Pfam" id="PF00117">
    <property type="entry name" value="GATase"/>
    <property type="match status" value="1"/>
</dbReference>
<dbReference type="SUPFAM" id="SSF52317">
    <property type="entry name" value="Class I glutamine amidotransferase-like"/>
    <property type="match status" value="1"/>
</dbReference>
<dbReference type="SUPFAM" id="SSF52540">
    <property type="entry name" value="P-loop containing nucleoside triphosphate hydrolases"/>
    <property type="match status" value="1"/>
</dbReference>
<dbReference type="PROSITE" id="PS51273">
    <property type="entry name" value="GATASE_TYPE_1"/>
    <property type="match status" value="1"/>
</dbReference>
<gene>
    <name evidence="1" type="primary">pyrG</name>
    <name type="synonym">ctrA</name>
    <name type="ordered locus">SAV2127</name>
</gene>
<sequence>MTKFIFVTGGVVSSLGKGITASSLGRLLKDRGLNVTIQKFDPYLNVDPGTMSPYQHGEVFVTDDGAETDLDLGHYERFIDINLNKFSNVTAGKVYSHVLKKERRGDYLGGTVQVIPHITNEIKERLLLAGESTNADVVITEIGGTTGDIESLPFIEAIRQIRSDLGRENVMYVHCTLLPYIKAAGEMKTKPTQHSVKELRGLGIQPDLIVVRTEYEMTQDLKDKIALFCDINKESVIECRDADSLYEIPLQLSQQNMDDIVIKRLQLNAKYETQLDEWKQLLDIVNNLDGKITIGLVGKYVSLQDAYLSVVESLKHAGYPFAKDIDIRWIDSSEVTDENAAEYLADVDGILVPGGFGFRASEGKISAIKYARENNVPFFGICLGMQLATVEFSRNVLGLEGAHSAELDPATPYPIIDLLPEQKDIEDLGGTLRLGLYPCSIKEGTLAQDVYGKAEIEERHRHRYEFNNDYREQLEANGMVISGTSPDGRLVEMVEIPTNDFFIACQFHPEFLSRPNRPHPIFKSFIEASLKYQQNK</sequence>
<name>PYRG_STAAM</name>
<evidence type="ECO:0000255" key="1">
    <source>
        <dbReference type="HAMAP-Rule" id="MF_01227"/>
    </source>
</evidence>